<sequence>MGPRNPSPDHLSESESEEEENISYLNESSGEEWDSSEEEDSMVPNLSPLESLAWQVKCLLKYSTTWKPLNPNSWLYHAKLLDPSTPVHILREIGLRLSHCSHCVPKLEPIPEWPPLASCGVPPFQKPLTSPSRLSRDHATLNGALQFATKQLSRTLSRATPIPEYLKQIPNSCVSGCCCGWLTKTVKETTRTEPINTTYSYTDFQKAVNKLLTASL</sequence>
<comment type="function">
    <text evidence="2 3">Functions as a substrate recognition component for CUL4-DDB1 E3 ubiquitin-protein ligase complex, which mediates ubiquitination and proteasome-dependent degradation of nuclear proteins.</text>
</comment>
<comment type="pathway">
    <text>Protein modification; protein ubiquitination.</text>
</comment>
<comment type="subunit">
    <text evidence="2">Interacts with DDB1 and CUL4A.</text>
</comment>
<comment type="interaction">
    <interactant intactId="EBI-2559096">
        <id>Q9NXF7</id>
    </interactant>
    <interactant intactId="EBI-6164389">
        <id>P04608</id>
        <label>tat</label>
    </interactant>
    <organismsDiffer>true</organismsDiffer>
    <experiments>2</experiments>
</comment>
<comment type="subcellular location">
    <subcellularLocation>
        <location evidence="3">Nucleus</location>
    </subcellularLocation>
</comment>
<name>DCA16_HUMAN</name>
<gene>
    <name evidence="5" type="primary">DCAF16</name>
    <name type="synonym">C4orf30</name>
</gene>
<reference key="1">
    <citation type="journal article" date="2004" name="Nat. Genet.">
        <title>Complete sequencing and characterization of 21,243 full-length human cDNAs.</title>
        <authorList>
            <person name="Ota T."/>
            <person name="Suzuki Y."/>
            <person name="Nishikawa T."/>
            <person name="Otsuki T."/>
            <person name="Sugiyama T."/>
            <person name="Irie R."/>
            <person name="Wakamatsu A."/>
            <person name="Hayashi K."/>
            <person name="Sato H."/>
            <person name="Nagai K."/>
            <person name="Kimura K."/>
            <person name="Makita H."/>
            <person name="Sekine M."/>
            <person name="Obayashi M."/>
            <person name="Nishi T."/>
            <person name="Shibahara T."/>
            <person name="Tanaka T."/>
            <person name="Ishii S."/>
            <person name="Yamamoto J."/>
            <person name="Saito K."/>
            <person name="Kawai Y."/>
            <person name="Isono Y."/>
            <person name="Nakamura Y."/>
            <person name="Nagahari K."/>
            <person name="Murakami K."/>
            <person name="Yasuda T."/>
            <person name="Iwayanagi T."/>
            <person name="Wagatsuma M."/>
            <person name="Shiratori A."/>
            <person name="Sudo H."/>
            <person name="Hosoiri T."/>
            <person name="Kaku Y."/>
            <person name="Kodaira H."/>
            <person name="Kondo H."/>
            <person name="Sugawara M."/>
            <person name="Takahashi M."/>
            <person name="Kanda K."/>
            <person name="Yokoi T."/>
            <person name="Furuya T."/>
            <person name="Kikkawa E."/>
            <person name="Omura Y."/>
            <person name="Abe K."/>
            <person name="Kamihara K."/>
            <person name="Katsuta N."/>
            <person name="Sato K."/>
            <person name="Tanikawa M."/>
            <person name="Yamazaki M."/>
            <person name="Ninomiya K."/>
            <person name="Ishibashi T."/>
            <person name="Yamashita H."/>
            <person name="Murakawa K."/>
            <person name="Fujimori K."/>
            <person name="Tanai H."/>
            <person name="Kimata M."/>
            <person name="Watanabe M."/>
            <person name="Hiraoka S."/>
            <person name="Chiba Y."/>
            <person name="Ishida S."/>
            <person name="Ono Y."/>
            <person name="Takiguchi S."/>
            <person name="Watanabe S."/>
            <person name="Yosida M."/>
            <person name="Hotuta T."/>
            <person name="Kusano J."/>
            <person name="Kanehori K."/>
            <person name="Takahashi-Fujii A."/>
            <person name="Hara H."/>
            <person name="Tanase T.-O."/>
            <person name="Nomura Y."/>
            <person name="Togiya S."/>
            <person name="Komai F."/>
            <person name="Hara R."/>
            <person name="Takeuchi K."/>
            <person name="Arita M."/>
            <person name="Imose N."/>
            <person name="Musashino K."/>
            <person name="Yuuki H."/>
            <person name="Oshima A."/>
            <person name="Sasaki N."/>
            <person name="Aotsuka S."/>
            <person name="Yoshikawa Y."/>
            <person name="Matsunawa H."/>
            <person name="Ichihara T."/>
            <person name="Shiohata N."/>
            <person name="Sano S."/>
            <person name="Moriya S."/>
            <person name="Momiyama H."/>
            <person name="Satoh N."/>
            <person name="Takami S."/>
            <person name="Terashima Y."/>
            <person name="Suzuki O."/>
            <person name="Nakagawa S."/>
            <person name="Senoh A."/>
            <person name="Mizoguchi H."/>
            <person name="Goto Y."/>
            <person name="Shimizu F."/>
            <person name="Wakebe H."/>
            <person name="Hishigaki H."/>
            <person name="Watanabe T."/>
            <person name="Sugiyama A."/>
            <person name="Takemoto M."/>
            <person name="Kawakami B."/>
            <person name="Yamazaki M."/>
            <person name="Watanabe K."/>
            <person name="Kumagai A."/>
            <person name="Itakura S."/>
            <person name="Fukuzumi Y."/>
            <person name="Fujimori Y."/>
            <person name="Komiyama M."/>
            <person name="Tashiro H."/>
            <person name="Tanigami A."/>
            <person name="Fujiwara T."/>
            <person name="Ono T."/>
            <person name="Yamada K."/>
            <person name="Fujii Y."/>
            <person name="Ozaki K."/>
            <person name="Hirao M."/>
            <person name="Ohmori Y."/>
            <person name="Kawabata A."/>
            <person name="Hikiji T."/>
            <person name="Kobatake N."/>
            <person name="Inagaki H."/>
            <person name="Ikema Y."/>
            <person name="Okamoto S."/>
            <person name="Okitani R."/>
            <person name="Kawakami T."/>
            <person name="Noguchi S."/>
            <person name="Itoh T."/>
            <person name="Shigeta K."/>
            <person name="Senba T."/>
            <person name="Matsumura K."/>
            <person name="Nakajima Y."/>
            <person name="Mizuno T."/>
            <person name="Morinaga M."/>
            <person name="Sasaki M."/>
            <person name="Togashi T."/>
            <person name="Oyama M."/>
            <person name="Hata H."/>
            <person name="Watanabe M."/>
            <person name="Komatsu T."/>
            <person name="Mizushima-Sugano J."/>
            <person name="Satoh T."/>
            <person name="Shirai Y."/>
            <person name="Takahashi Y."/>
            <person name="Nakagawa K."/>
            <person name="Okumura K."/>
            <person name="Nagase T."/>
            <person name="Nomura N."/>
            <person name="Kikuchi H."/>
            <person name="Masuho Y."/>
            <person name="Yamashita R."/>
            <person name="Nakai K."/>
            <person name="Yada T."/>
            <person name="Nakamura Y."/>
            <person name="Ohara O."/>
            <person name="Isogai T."/>
            <person name="Sugano S."/>
        </authorList>
    </citation>
    <scope>NUCLEOTIDE SEQUENCE [LARGE SCALE MRNA]</scope>
</reference>
<reference key="2">
    <citation type="submission" date="2005-07" db="EMBL/GenBank/DDBJ databases">
        <authorList>
            <person name="Mural R.J."/>
            <person name="Istrail S."/>
            <person name="Sutton G.G."/>
            <person name="Florea L."/>
            <person name="Halpern A.L."/>
            <person name="Mobarry C.M."/>
            <person name="Lippert R."/>
            <person name="Walenz B."/>
            <person name="Shatkay H."/>
            <person name="Dew I."/>
            <person name="Miller J.R."/>
            <person name="Flanigan M.J."/>
            <person name="Edwards N.J."/>
            <person name="Bolanos R."/>
            <person name="Fasulo D."/>
            <person name="Halldorsson B.V."/>
            <person name="Hannenhalli S."/>
            <person name="Turner R."/>
            <person name="Yooseph S."/>
            <person name="Lu F."/>
            <person name="Nusskern D.R."/>
            <person name="Shue B.C."/>
            <person name="Zheng X.H."/>
            <person name="Zhong F."/>
            <person name="Delcher A.L."/>
            <person name="Huson D.H."/>
            <person name="Kravitz S.A."/>
            <person name="Mouchard L."/>
            <person name="Reinert K."/>
            <person name="Remington K.A."/>
            <person name="Clark A.G."/>
            <person name="Waterman M.S."/>
            <person name="Eichler E.E."/>
            <person name="Adams M.D."/>
            <person name="Hunkapiller M.W."/>
            <person name="Myers E.W."/>
            <person name="Venter J.C."/>
        </authorList>
    </citation>
    <scope>NUCLEOTIDE SEQUENCE [LARGE SCALE GENOMIC DNA]</scope>
</reference>
<reference key="3">
    <citation type="journal article" date="2004" name="Genome Res.">
        <title>The status, quality, and expansion of the NIH full-length cDNA project: the Mammalian Gene Collection (MGC).</title>
        <authorList>
            <consortium name="The MGC Project Team"/>
        </authorList>
    </citation>
    <scope>NUCLEOTIDE SEQUENCE [LARGE SCALE MRNA]</scope>
    <source>
        <tissue>Heart</tissue>
        <tissue>Kidney</tissue>
        <tissue>Lung</tissue>
        <tissue>Testis</tissue>
    </source>
</reference>
<reference key="4">
    <citation type="journal article" date="2006" name="Mol. Cell">
        <title>A family of diverse Cul4-Ddb1-interacting proteins includes Cdt2, which is required for S phase destruction of the replication factor Cdt1.</title>
        <authorList>
            <person name="Jin J."/>
            <person name="Arias E.E."/>
            <person name="Chen J."/>
            <person name="Harper J.W."/>
            <person name="Walter J.C."/>
        </authorList>
    </citation>
    <scope>FUNCTION</scope>
    <scope>INTERACTION WITH DDB1 AND CUL4A</scope>
    <scope>IDENTIFICATION BY MASS SPECTROMETRY</scope>
</reference>
<reference key="5">
    <citation type="journal article" date="2009" name="Science">
        <title>Lysine acetylation targets protein complexes and co-regulates major cellular functions.</title>
        <authorList>
            <person name="Choudhary C."/>
            <person name="Kumar C."/>
            <person name="Gnad F."/>
            <person name="Nielsen M.L."/>
            <person name="Rehman M."/>
            <person name="Walther T.C."/>
            <person name="Olsen J.V."/>
            <person name="Mann M."/>
        </authorList>
    </citation>
    <scope>ACETYLATION [LARGE SCALE ANALYSIS] AT LYS-61</scope>
    <scope>IDENTIFICATION BY MASS SPECTROMETRY [LARGE SCALE ANALYSIS]</scope>
</reference>
<reference key="6">
    <citation type="journal article" date="2011" name="BMC Syst. Biol.">
        <title>Initial characterization of the human central proteome.</title>
        <authorList>
            <person name="Burkard T.R."/>
            <person name="Planyavsky M."/>
            <person name="Kaupe I."/>
            <person name="Breitwieser F.P."/>
            <person name="Buerckstuemmer T."/>
            <person name="Bennett K.L."/>
            <person name="Superti-Furga G."/>
            <person name="Colinge J."/>
        </authorList>
    </citation>
    <scope>IDENTIFICATION BY MASS SPECTROMETRY [LARGE SCALE ANALYSIS]</scope>
</reference>
<reference key="7">
    <citation type="journal article" date="2019" name="Nat. Chem. Biol.">
        <title>Electrophilic PROTACs that degrade nuclear proteins by engaging DCAF16.</title>
        <authorList>
            <person name="Zhang X."/>
            <person name="Crowley V.M."/>
            <person name="Wucherpfennig T.G."/>
            <person name="Dix M.M."/>
            <person name="Cravatt B.F."/>
        </authorList>
    </citation>
    <scope>FUNCTION</scope>
    <scope>SUBCELLULAR LOCATION</scope>
</reference>
<organism>
    <name type="scientific">Homo sapiens</name>
    <name type="common">Human</name>
    <dbReference type="NCBI Taxonomy" id="9606"/>
    <lineage>
        <taxon>Eukaryota</taxon>
        <taxon>Metazoa</taxon>
        <taxon>Chordata</taxon>
        <taxon>Craniata</taxon>
        <taxon>Vertebrata</taxon>
        <taxon>Euteleostomi</taxon>
        <taxon>Mammalia</taxon>
        <taxon>Eutheria</taxon>
        <taxon>Euarchontoglires</taxon>
        <taxon>Primates</taxon>
        <taxon>Haplorrhini</taxon>
        <taxon>Catarrhini</taxon>
        <taxon>Hominidae</taxon>
        <taxon>Homo</taxon>
    </lineage>
</organism>
<feature type="chain" id="PRO_0000301964" description="DDB1- and CUL4-associated factor 16">
    <location>
        <begin position="1"/>
        <end position="216"/>
    </location>
</feature>
<feature type="region of interest" description="Disordered" evidence="1">
    <location>
        <begin position="1"/>
        <end position="42"/>
    </location>
</feature>
<feature type="compositionally biased region" description="Acidic residues" evidence="1">
    <location>
        <begin position="29"/>
        <end position="41"/>
    </location>
</feature>
<feature type="modified residue" description="N6-acetyllysine" evidence="6">
    <location>
        <position position="61"/>
    </location>
</feature>
<feature type="sequence variant" id="VAR_034917" description="In dbSNP:rs34085539.">
    <original>N</original>
    <variation>S</variation>
    <location>
        <position position="45"/>
    </location>
</feature>
<feature type="sequence variant" id="VAR_034918" description="In dbSNP:rs7690457.">
    <original>T</original>
    <variation>I</variation>
    <location>
        <position position="129"/>
    </location>
</feature>
<feature type="sequence conflict" description="In Ref. 1; BAG51629." evidence="4" ref="1">
    <original>W</original>
    <variation>R</variation>
    <location>
        <position position="181"/>
    </location>
</feature>
<feature type="helix" evidence="7">
    <location>
        <begin position="48"/>
        <end position="60"/>
    </location>
</feature>
<feature type="strand" evidence="7">
    <location>
        <begin position="64"/>
        <end position="67"/>
    </location>
</feature>
<feature type="helix" evidence="7">
    <location>
        <begin position="74"/>
        <end position="77"/>
    </location>
</feature>
<feature type="helix" evidence="7">
    <location>
        <begin position="88"/>
        <end position="94"/>
    </location>
</feature>
<feature type="strand" evidence="7">
    <location>
        <begin position="97"/>
        <end position="100"/>
    </location>
</feature>
<feature type="turn" evidence="7">
    <location>
        <begin position="101"/>
        <end position="103"/>
    </location>
</feature>
<feature type="helix" evidence="7">
    <location>
        <begin position="116"/>
        <end position="119"/>
    </location>
</feature>
<feature type="helix" evidence="7">
    <location>
        <begin position="131"/>
        <end position="138"/>
    </location>
</feature>
<feature type="helix" evidence="7">
    <location>
        <begin position="143"/>
        <end position="157"/>
    </location>
</feature>
<feature type="helix" evidence="7">
    <location>
        <begin position="179"/>
        <end position="186"/>
    </location>
</feature>
<feature type="turn" evidence="7">
    <location>
        <begin position="190"/>
        <end position="192"/>
    </location>
</feature>
<feature type="helix" evidence="7">
    <location>
        <begin position="201"/>
        <end position="215"/>
    </location>
</feature>
<accession>Q9NXF7</accession>
<accession>B3KPB7</accession>
<dbReference type="EMBL" id="AK000287">
    <property type="protein sequence ID" value="BAA91056.1"/>
    <property type="molecule type" value="mRNA"/>
</dbReference>
<dbReference type="EMBL" id="AK056116">
    <property type="protein sequence ID" value="BAG51629.1"/>
    <property type="molecule type" value="mRNA"/>
</dbReference>
<dbReference type="EMBL" id="CH471069">
    <property type="protein sequence ID" value="EAW92784.1"/>
    <property type="molecule type" value="Genomic_DNA"/>
</dbReference>
<dbReference type="EMBL" id="BC050697">
    <property type="protein sequence ID" value="AAH50697.1"/>
    <property type="molecule type" value="mRNA"/>
</dbReference>
<dbReference type="EMBL" id="BC068025">
    <property type="protein sequence ID" value="AAH68025.1"/>
    <property type="molecule type" value="mRNA"/>
</dbReference>
<dbReference type="EMBL" id="BC101716">
    <property type="protein sequence ID" value="AAI01717.1"/>
    <property type="molecule type" value="mRNA"/>
</dbReference>
<dbReference type="EMBL" id="BC101718">
    <property type="protein sequence ID" value="AAI01719.1"/>
    <property type="molecule type" value="mRNA"/>
</dbReference>
<dbReference type="CCDS" id="CCDS3423.1"/>
<dbReference type="RefSeq" id="NP_001332809.1">
    <property type="nucleotide sequence ID" value="NM_001345880.2"/>
</dbReference>
<dbReference type="RefSeq" id="NP_001332810.1">
    <property type="nucleotide sequence ID" value="NM_001345881.2"/>
</dbReference>
<dbReference type="RefSeq" id="NP_001332811.1">
    <property type="nucleotide sequence ID" value="NM_001345882.2"/>
</dbReference>
<dbReference type="RefSeq" id="NP_001332813.1">
    <property type="nucleotide sequence ID" value="NM_001345884.2"/>
</dbReference>
<dbReference type="RefSeq" id="NP_001332814.1">
    <property type="nucleotide sequence ID" value="NM_001345885.2"/>
</dbReference>
<dbReference type="RefSeq" id="NP_060211.3">
    <property type="nucleotide sequence ID" value="NM_017741.3"/>
</dbReference>
<dbReference type="RefSeq" id="XP_016863816.1">
    <property type="nucleotide sequence ID" value="XM_017008327.1"/>
</dbReference>
<dbReference type="RefSeq" id="XP_016863817.1">
    <property type="nucleotide sequence ID" value="XM_017008328.1"/>
</dbReference>
<dbReference type="RefSeq" id="XP_047271815.1">
    <property type="nucleotide sequence ID" value="XM_047415859.1"/>
</dbReference>
<dbReference type="RefSeq" id="XP_047271816.1">
    <property type="nucleotide sequence ID" value="XM_047415860.1"/>
</dbReference>
<dbReference type="RefSeq" id="XP_047271817.1">
    <property type="nucleotide sequence ID" value="XM_047415861.1"/>
</dbReference>
<dbReference type="RefSeq" id="XP_054206276.1">
    <property type="nucleotide sequence ID" value="XM_054350301.1"/>
</dbReference>
<dbReference type="RefSeq" id="XP_054206277.1">
    <property type="nucleotide sequence ID" value="XM_054350302.1"/>
</dbReference>
<dbReference type="RefSeq" id="XP_054206278.1">
    <property type="nucleotide sequence ID" value="XM_054350303.1"/>
</dbReference>
<dbReference type="PDB" id="8G46">
    <property type="method" value="EM"/>
    <property type="resolution" value="2.20 A"/>
    <property type="chains" value="B=1-216"/>
</dbReference>
<dbReference type="PDB" id="8OV6">
    <property type="method" value="EM"/>
    <property type="resolution" value="3.77 A"/>
    <property type="chains" value="B=1-216"/>
</dbReference>
<dbReference type="PDBsum" id="8G46"/>
<dbReference type="PDBsum" id="8OV6"/>
<dbReference type="EMDB" id="EMD-17172"/>
<dbReference type="EMDB" id="EMD-29714"/>
<dbReference type="SMR" id="Q9NXF7"/>
<dbReference type="BioGRID" id="120224">
    <property type="interactions" value="69"/>
</dbReference>
<dbReference type="ComplexPortal" id="CPX-2413">
    <property type="entry name" value="CRL4-DCAF16 E3 ubiquitin ligase complex, CUL4A variant"/>
</dbReference>
<dbReference type="ComplexPortal" id="CPX-2414">
    <property type="entry name" value="CRL4-DCAF16 E3 ubiquitin ligase complex, CUL4B variant"/>
</dbReference>
<dbReference type="FunCoup" id="Q9NXF7">
    <property type="interactions" value="653"/>
</dbReference>
<dbReference type="IntAct" id="Q9NXF7">
    <property type="interactions" value="49"/>
</dbReference>
<dbReference type="MINT" id="Q9NXF7"/>
<dbReference type="STRING" id="9606.ENSP00000371682"/>
<dbReference type="iPTMnet" id="Q9NXF7"/>
<dbReference type="PhosphoSitePlus" id="Q9NXF7"/>
<dbReference type="BioMuta" id="DCAF16"/>
<dbReference type="DMDM" id="74719452"/>
<dbReference type="jPOST" id="Q9NXF7"/>
<dbReference type="MassIVE" id="Q9NXF7"/>
<dbReference type="PaxDb" id="9606-ENSP00000371682"/>
<dbReference type="PeptideAtlas" id="Q9NXF7"/>
<dbReference type="ProteomicsDB" id="83088"/>
<dbReference type="Pumba" id="Q9NXF7"/>
<dbReference type="Antibodypedia" id="51178">
    <property type="antibodies" value="16 antibodies from 9 providers"/>
</dbReference>
<dbReference type="DNASU" id="54876"/>
<dbReference type="Ensembl" id="ENST00000382247.6">
    <property type="protein sequence ID" value="ENSP00000371682.1"/>
    <property type="gene ID" value="ENSG00000163257.11"/>
</dbReference>
<dbReference type="GeneID" id="54876"/>
<dbReference type="KEGG" id="hsa:54876"/>
<dbReference type="MANE-Select" id="ENST00000382247.6">
    <property type="protein sequence ID" value="ENSP00000371682.1"/>
    <property type="RefSeq nucleotide sequence ID" value="NM_017741.4"/>
    <property type="RefSeq protein sequence ID" value="NP_060211.3"/>
</dbReference>
<dbReference type="UCSC" id="uc003gpn.3">
    <property type="organism name" value="human"/>
</dbReference>
<dbReference type="AGR" id="HGNC:25987"/>
<dbReference type="CTD" id="54876"/>
<dbReference type="DisGeNET" id="54876"/>
<dbReference type="GeneCards" id="DCAF16"/>
<dbReference type="HGNC" id="HGNC:25987">
    <property type="gene designation" value="DCAF16"/>
</dbReference>
<dbReference type="HPA" id="ENSG00000163257">
    <property type="expression patterns" value="Low tissue specificity"/>
</dbReference>
<dbReference type="MIM" id="620524">
    <property type="type" value="gene"/>
</dbReference>
<dbReference type="neXtProt" id="NX_Q9NXF7"/>
<dbReference type="OpenTargets" id="ENSG00000163257"/>
<dbReference type="PharmGKB" id="PA165663579"/>
<dbReference type="VEuPathDB" id="HostDB:ENSG00000163257"/>
<dbReference type="eggNOG" id="ENOG502RC7Y">
    <property type="taxonomic scope" value="Eukaryota"/>
</dbReference>
<dbReference type="GeneTree" id="ENSGT00390000012430"/>
<dbReference type="HOGENOM" id="CLU_111172_0_0_1"/>
<dbReference type="InParanoid" id="Q9NXF7"/>
<dbReference type="OMA" id="CVPRLEP"/>
<dbReference type="OrthoDB" id="9618972at2759"/>
<dbReference type="PAN-GO" id="Q9NXF7">
    <property type="GO annotations" value="1 GO annotation based on evolutionary models"/>
</dbReference>
<dbReference type="PhylomeDB" id="Q9NXF7"/>
<dbReference type="TreeFam" id="TF341783"/>
<dbReference type="PathwayCommons" id="Q9NXF7"/>
<dbReference type="Reactome" id="R-HSA-8951664">
    <property type="pathway name" value="Neddylation"/>
</dbReference>
<dbReference type="SignaLink" id="Q9NXF7"/>
<dbReference type="UniPathway" id="UPA00143"/>
<dbReference type="BioGRID-ORCS" id="54876">
    <property type="hits" value="7 hits in 1181 CRISPR screens"/>
</dbReference>
<dbReference type="ChiTaRS" id="DCAF16">
    <property type="organism name" value="human"/>
</dbReference>
<dbReference type="GenomeRNAi" id="54876"/>
<dbReference type="Pharos" id="Q9NXF7">
    <property type="development level" value="Tdark"/>
</dbReference>
<dbReference type="PRO" id="PR:Q9NXF7"/>
<dbReference type="Proteomes" id="UP000005640">
    <property type="component" value="Chromosome 4"/>
</dbReference>
<dbReference type="RNAct" id="Q9NXF7">
    <property type="molecule type" value="protein"/>
</dbReference>
<dbReference type="Bgee" id="ENSG00000163257">
    <property type="expression patterns" value="Expressed in calcaneal tendon and 192 other cell types or tissues"/>
</dbReference>
<dbReference type="GO" id="GO:0080008">
    <property type="term" value="C:Cul4-RING E3 ubiquitin ligase complex"/>
    <property type="evidence" value="ECO:0000314"/>
    <property type="project" value="UniProtKB"/>
</dbReference>
<dbReference type="GO" id="GO:0005654">
    <property type="term" value="C:nucleoplasm"/>
    <property type="evidence" value="ECO:0000304"/>
    <property type="project" value="Reactome"/>
</dbReference>
<dbReference type="GO" id="GO:0016567">
    <property type="term" value="P:protein ubiquitination"/>
    <property type="evidence" value="ECO:0007669"/>
    <property type="project" value="UniProtKB-UniPathway"/>
</dbReference>
<dbReference type="InterPro" id="IPR028216">
    <property type="entry name" value="DCAF16"/>
</dbReference>
<dbReference type="PANTHER" id="PTHR16194">
    <property type="entry name" value="DDB1- AND CUL4-ASSOCIATED FACTOR 16"/>
    <property type="match status" value="1"/>
</dbReference>
<dbReference type="PANTHER" id="PTHR16194:SF0">
    <property type="entry name" value="DDB1- AND CUL4-ASSOCIATED FACTOR 16"/>
    <property type="match status" value="1"/>
</dbReference>
<dbReference type="Pfam" id="PF15349">
    <property type="entry name" value="DCA16"/>
    <property type="match status" value="1"/>
</dbReference>
<protein>
    <recommendedName>
        <fullName evidence="4">DDB1- and CUL4-associated factor 16</fullName>
    </recommendedName>
</protein>
<evidence type="ECO:0000256" key="1">
    <source>
        <dbReference type="SAM" id="MobiDB-lite"/>
    </source>
</evidence>
<evidence type="ECO:0000269" key="2">
    <source>
    </source>
</evidence>
<evidence type="ECO:0000269" key="3">
    <source>
    </source>
</evidence>
<evidence type="ECO:0000305" key="4"/>
<evidence type="ECO:0000312" key="5">
    <source>
        <dbReference type="HGNC" id="HGNC:25987"/>
    </source>
</evidence>
<evidence type="ECO:0007744" key="6">
    <source>
    </source>
</evidence>
<evidence type="ECO:0007829" key="7">
    <source>
        <dbReference type="PDB" id="8G46"/>
    </source>
</evidence>
<proteinExistence type="evidence at protein level"/>
<keyword id="KW-0002">3D-structure</keyword>
<keyword id="KW-0007">Acetylation</keyword>
<keyword id="KW-0539">Nucleus</keyword>
<keyword id="KW-1267">Proteomics identification</keyword>
<keyword id="KW-1185">Reference proteome</keyword>
<keyword id="KW-0833">Ubl conjugation pathway</keyword>